<gene>
    <name type="primary">pseC</name>
    <name type="ordered locus">Cj1294</name>
</gene>
<evidence type="ECO:0000250" key="1"/>
<evidence type="ECO:0000269" key="2">
    <source>
    </source>
</evidence>
<evidence type="ECO:0000269" key="3">
    <source>
    </source>
</evidence>
<evidence type="ECO:0000305" key="4"/>
<keyword id="KW-0032">Aminotransferase</keyword>
<keyword id="KW-0663">Pyridoxal phosphate</keyword>
<keyword id="KW-1185">Reference proteome</keyword>
<keyword id="KW-0808">Transferase</keyword>
<protein>
    <recommendedName>
        <fullName>UDP-4-amino-4,6-dideoxy-N-acetyl-beta-L-altrosamine transaminase</fullName>
        <ecNumber evidence="2">2.6.1.92</ecNumber>
    </recommendedName>
    <alternativeName>
        <fullName>Pseudaminic acid biosynthesis protein C</fullName>
    </alternativeName>
</protein>
<reference key="1">
    <citation type="journal article" date="2000" name="Nature">
        <title>The genome sequence of the food-borne pathogen Campylobacter jejuni reveals hypervariable sequences.</title>
        <authorList>
            <person name="Parkhill J."/>
            <person name="Wren B.W."/>
            <person name="Mungall K.L."/>
            <person name="Ketley J.M."/>
            <person name="Churcher C.M."/>
            <person name="Basham D."/>
            <person name="Chillingworth T."/>
            <person name="Davies R.M."/>
            <person name="Feltwell T."/>
            <person name="Holroyd S."/>
            <person name="Jagels K."/>
            <person name="Karlyshev A.V."/>
            <person name="Moule S."/>
            <person name="Pallen M.J."/>
            <person name="Penn C.W."/>
            <person name="Quail M.A."/>
            <person name="Rajandream M.A."/>
            <person name="Rutherford K.M."/>
            <person name="van Vliet A.H.M."/>
            <person name="Whitehead S."/>
            <person name="Barrell B.G."/>
        </authorList>
    </citation>
    <scope>NUCLEOTIDE SEQUENCE [LARGE SCALE GENOMIC DNA]</scope>
    <source>
        <strain>ATCC 700819 / NCTC 11168</strain>
    </source>
</reference>
<reference key="2">
    <citation type="journal article" date="2006" name="J. Biol. Chem.">
        <title>Functional characterization of dehydratase/aminotransferase pairs from Helicobacter and Campylobacter: enzymes distinguishing the pseudaminic acid and bacillosamine biosynthetic pathways.</title>
        <authorList>
            <person name="Schoenhofen I.C."/>
            <person name="McNally D.J."/>
            <person name="Vinogradov E."/>
            <person name="Whitfield D."/>
            <person name="Young N.M."/>
            <person name="Dick S."/>
            <person name="Wakarchuk W.W."/>
            <person name="Brisson J.R."/>
            <person name="Logan S.M."/>
        </authorList>
    </citation>
    <scope>FUNCTION</scope>
    <scope>CATALYTIC ACTIVITY</scope>
    <scope>BIOPHYSICOCHEMICAL PROPERTIES</scope>
    <source>
        <strain>ATCC 700819 / NCTC 11168</strain>
    </source>
</reference>
<reference key="3">
    <citation type="journal article" date="2006" name="J. Biol. Chem.">
        <title>Cj1121c, a novel UDP-4-keto-6-deoxy-GlcNAc C-4 aminotransferase essential for protein glycosylation and virulence in Campylobacter jejuni.</title>
        <authorList>
            <person name="Vijayakumar S."/>
            <person name="Merkx-Jacques A."/>
            <person name="Ratnayake D.B."/>
            <person name="Gryski I."/>
            <person name="Obhi R.K."/>
            <person name="Houle S."/>
            <person name="Dozois C.M."/>
            <person name="Creuzenet C."/>
        </authorList>
    </citation>
    <scope>BIOPHYSICOCHEMICAL PROPERTIES</scope>
    <source>
        <strain>ATCC 700819 / NCTC 11168</strain>
    </source>
</reference>
<proteinExistence type="evidence at protein level"/>
<feature type="chain" id="PRO_0000418958" description="UDP-4-amino-4,6-dideoxy-N-acetyl-beta-L-altrosamine transaminase">
    <location>
        <begin position="1"/>
        <end position="376"/>
    </location>
</feature>
<feature type="binding site" evidence="1">
    <location>
        <position position="4"/>
    </location>
    <ligand>
        <name>substrate</name>
    </ligand>
</feature>
<feature type="binding site" evidence="1">
    <location>
        <begin position="24"/>
        <end position="27"/>
    </location>
    <ligand>
        <name>substrate</name>
    </ligand>
</feature>
<feature type="binding site" evidence="1">
    <location>
        <position position="54"/>
    </location>
    <ligand>
        <name>substrate</name>
    </ligand>
</feature>
<feature type="binding site" evidence="1">
    <location>
        <position position="176"/>
    </location>
    <ligand>
        <name>substrate</name>
    </ligand>
</feature>
<feature type="binding site" evidence="1">
    <location>
        <position position="226"/>
    </location>
    <ligand>
        <name>substrate</name>
    </ligand>
</feature>
<feature type="binding site" evidence="1">
    <location>
        <begin position="311"/>
        <end position="314"/>
    </location>
    <ligand>
        <name>substrate</name>
    </ligand>
</feature>
<feature type="modified residue" description="N6-(pyridoxal phosphate)lysine" evidence="1">
    <location>
        <position position="181"/>
    </location>
</feature>
<dbReference type="EC" id="2.6.1.92" evidence="2"/>
<dbReference type="EMBL" id="AL111168">
    <property type="protein sequence ID" value="CAL35408.1"/>
    <property type="molecule type" value="Genomic_DNA"/>
</dbReference>
<dbReference type="PIR" id="C81272">
    <property type="entry name" value="C81272"/>
</dbReference>
<dbReference type="RefSeq" id="WP_002856503.1">
    <property type="nucleotide sequence ID" value="NZ_SZUC01000001.1"/>
</dbReference>
<dbReference type="RefSeq" id="YP_002344684.1">
    <property type="nucleotide sequence ID" value="NC_002163.1"/>
</dbReference>
<dbReference type="SMR" id="Q0P8W3"/>
<dbReference type="IntAct" id="Q0P8W3">
    <property type="interactions" value="19"/>
</dbReference>
<dbReference type="STRING" id="192222.Cj1294"/>
<dbReference type="PaxDb" id="192222-Cj1294"/>
<dbReference type="EnsemblBacteria" id="CAL35408">
    <property type="protein sequence ID" value="CAL35408"/>
    <property type="gene ID" value="Cj1294"/>
</dbReference>
<dbReference type="GeneID" id="905586"/>
<dbReference type="KEGG" id="cje:Cj1294"/>
<dbReference type="PATRIC" id="fig|192222.6.peg.1276"/>
<dbReference type="eggNOG" id="COG0399">
    <property type="taxonomic scope" value="Bacteria"/>
</dbReference>
<dbReference type="HOGENOM" id="CLU_033332_0_3_7"/>
<dbReference type="OrthoDB" id="5342089at2"/>
<dbReference type="Proteomes" id="UP000000799">
    <property type="component" value="Chromosome"/>
</dbReference>
<dbReference type="GO" id="GO:0030170">
    <property type="term" value="F:pyridoxal phosphate binding"/>
    <property type="evidence" value="ECO:0007669"/>
    <property type="project" value="TreeGrafter"/>
</dbReference>
<dbReference type="GO" id="GO:0008483">
    <property type="term" value="F:transaminase activity"/>
    <property type="evidence" value="ECO:0007669"/>
    <property type="project" value="UniProtKB-KW"/>
</dbReference>
<dbReference type="GO" id="GO:0000271">
    <property type="term" value="P:polysaccharide biosynthetic process"/>
    <property type="evidence" value="ECO:0007669"/>
    <property type="project" value="TreeGrafter"/>
</dbReference>
<dbReference type="CDD" id="cd00616">
    <property type="entry name" value="AHBA_syn"/>
    <property type="match status" value="1"/>
</dbReference>
<dbReference type="Gene3D" id="3.90.1150.10">
    <property type="entry name" value="Aspartate Aminotransferase, domain 1"/>
    <property type="match status" value="1"/>
</dbReference>
<dbReference type="Gene3D" id="3.40.640.10">
    <property type="entry name" value="Type I PLP-dependent aspartate aminotransferase-like (Major domain)"/>
    <property type="match status" value="1"/>
</dbReference>
<dbReference type="InterPro" id="IPR000653">
    <property type="entry name" value="DegT/StrS_aminotransferase"/>
</dbReference>
<dbReference type="InterPro" id="IPR020026">
    <property type="entry name" value="PseC"/>
</dbReference>
<dbReference type="InterPro" id="IPR015424">
    <property type="entry name" value="PyrdxlP-dep_Trfase"/>
</dbReference>
<dbReference type="InterPro" id="IPR015421">
    <property type="entry name" value="PyrdxlP-dep_Trfase_major"/>
</dbReference>
<dbReference type="InterPro" id="IPR015422">
    <property type="entry name" value="PyrdxlP-dep_Trfase_small"/>
</dbReference>
<dbReference type="NCBIfam" id="TIGR03588">
    <property type="entry name" value="PseC"/>
    <property type="match status" value="1"/>
</dbReference>
<dbReference type="PANTHER" id="PTHR30244:SF34">
    <property type="entry name" value="DTDP-4-AMINO-4,6-DIDEOXYGALACTOSE TRANSAMINASE"/>
    <property type="match status" value="1"/>
</dbReference>
<dbReference type="PANTHER" id="PTHR30244">
    <property type="entry name" value="TRANSAMINASE"/>
    <property type="match status" value="1"/>
</dbReference>
<dbReference type="Pfam" id="PF01041">
    <property type="entry name" value="DegT_DnrJ_EryC1"/>
    <property type="match status" value="1"/>
</dbReference>
<dbReference type="PIRSF" id="PIRSF000390">
    <property type="entry name" value="PLP_StrS"/>
    <property type="match status" value="1"/>
</dbReference>
<dbReference type="SUPFAM" id="SSF53383">
    <property type="entry name" value="PLP-dependent transferases"/>
    <property type="match status" value="1"/>
</dbReference>
<sequence length="376" mass="42450">MLTYSHQNIDQSDIDTLTKALKDEILTGGKKVNEFEEALCEYMGVKHACVLNSATSALHLAYTALGVQEKIVLTTPLTFAATANAALMAGAKVEFIDIKNDGNIDEKKLEARLLKESENIGAISVVDFAGNSVEMDEISNLTKKYNIPLIDDASHALGALYKSEKVGKKADLSIFSFHPVKPITTFEGGAVVSDNEELIDKIKLLRSHGIVKKRLWDSDMVELGYNYRLSDVACALGINQLKKLDHNLEKREEIANFYDKEFEKNPYFSTIKIKDYKKSSRHLYPILLFPEFYCQKEELFESLLHAGIGVQVHYKPTYEFSFYKKLLGEIKLQNADNFYKAELSIPCHQEMNLKDAKFVKDTLFSILEKVKKGYCG</sequence>
<name>PSEC_CAMJE</name>
<accession>Q0P8W3</accession>
<comment type="function">
    <text evidence="2">Catalyzes the second step in the biosynthesis of pseudaminic acid, a sialic-acid-like sugar that is used to modify flagellin. Uses UDP-2-acetamido-2,6-dideoxy-beta-L-arabino-4-hexulose as substrate producing UDP-4-amino-4,6-dideoxy-beta-L-AltNAc.</text>
</comment>
<comment type="catalytic activity">
    <reaction evidence="2">
        <text>UDP-4-amino-4,6-dideoxy-N-acetyl-beta-L-altrosamine + 2-oxoglutarate = UDP-2-acetamido-2,6-dideoxy-beta-L-arabino-hex-4-ulose + L-glutamate</text>
        <dbReference type="Rhea" id="RHEA:31767"/>
        <dbReference type="ChEBI" id="CHEBI:16810"/>
        <dbReference type="ChEBI" id="CHEBI:29985"/>
        <dbReference type="ChEBI" id="CHEBI:60101"/>
        <dbReference type="ChEBI" id="CHEBI:63389"/>
        <dbReference type="EC" id="2.6.1.92"/>
    </reaction>
</comment>
<comment type="biophysicochemical properties">
    <kinetics>
        <KM evidence="2 3">0.052 mM for UDP-4-amino-4,6-dideoxy-L-N-acetyl-beta-L-altrosamine</KM>
        <KM evidence="2 3">1.28 mM for UDP-4-amino-4,6-dideoxy-L-N-acetyl-beta-L-altrosamine</KM>
        <text evidence="2 3">kcat is 4 min(-1) (PubMed:16286454). kcat is 11.5 min(-1) (PubMed:16690622).</text>
    </kinetics>
</comment>
<comment type="similarity">
    <text evidence="4">Belongs to the DegT/DnrJ/EryC1 family.</text>
</comment>
<organism>
    <name type="scientific">Campylobacter jejuni subsp. jejuni serotype O:2 (strain ATCC 700819 / NCTC 11168)</name>
    <dbReference type="NCBI Taxonomy" id="192222"/>
    <lineage>
        <taxon>Bacteria</taxon>
        <taxon>Pseudomonadati</taxon>
        <taxon>Campylobacterota</taxon>
        <taxon>Epsilonproteobacteria</taxon>
        <taxon>Campylobacterales</taxon>
        <taxon>Campylobacteraceae</taxon>
        <taxon>Campylobacter</taxon>
    </lineage>
</organism>